<gene>
    <name type="primary">KRT71</name>
    <name type="synonym">K6IRS1</name>
    <name type="synonym">KB34</name>
    <name type="synonym">KRT6IRS1</name>
</gene>
<name>K2C71_HUMAN</name>
<sequence>MSRQFTCKSGAAAKGGFSGCSAVLSGGSSSSFRAGSKGLSGGFGSRSLYSLGGVRSLNVASGSGKSGGYGFGRGRASGFAGSMFGSVALGPVCPTVCPPGGIHQVTVNESLLAPLNVELDPEIQKVRAQEREQIKALNNKFASFIDKVRFLEQQNQVLETKWELLQQLDLNNCKNNLEPILEGYISNLRKQLETLSGDRVRLDSELRNVRDVVEDYKKRYEEEINKRTAAENEFVLLKKDVDAAYANKVELQAKVESMDQEIKFFRCLFEAEITQIQSHISDMSVILSMDNNRNLDLDSIIDEVRTQYEEIALKSKAEAEALYQTKFQELQLAAGRHGDDLKNTKNEISELTRLIQRIRSEIENVKKQASNLETAIADAEQRGDNALKDARAKLDELEGALHQAKEELARMLREYQELMSLKLALDMEIATYRKLLESEECRMSGEFPSPVSISIISSTSGGSVYGFRPSMVSGGYVANSSNCISGVCSVRGGEGRSRGSANDYKDTLGKGSSLSAPSKKTSR</sequence>
<organism>
    <name type="scientific">Homo sapiens</name>
    <name type="common">Human</name>
    <dbReference type="NCBI Taxonomy" id="9606"/>
    <lineage>
        <taxon>Eukaryota</taxon>
        <taxon>Metazoa</taxon>
        <taxon>Chordata</taxon>
        <taxon>Craniata</taxon>
        <taxon>Vertebrata</taxon>
        <taxon>Euteleostomi</taxon>
        <taxon>Mammalia</taxon>
        <taxon>Eutheria</taxon>
        <taxon>Euarchontoglires</taxon>
        <taxon>Primates</taxon>
        <taxon>Haplorrhini</taxon>
        <taxon>Catarrhini</taxon>
        <taxon>Hominidae</taxon>
        <taxon>Homo</taxon>
    </lineage>
</organism>
<dbReference type="EMBL" id="AJ308599">
    <property type="protein sequence ID" value="CAC43429.1"/>
    <property type="molecule type" value="mRNA"/>
</dbReference>
<dbReference type="EMBL" id="AK122795">
    <property type="protein sequence ID" value="BAG53733.1"/>
    <property type="molecule type" value="mRNA"/>
</dbReference>
<dbReference type="EMBL" id="AC055736">
    <property type="status" value="NOT_ANNOTATED_CDS"/>
    <property type="molecule type" value="Genomic_DNA"/>
</dbReference>
<dbReference type="EMBL" id="CH471054">
    <property type="protein sequence ID" value="EAW96636.1"/>
    <property type="molecule type" value="Genomic_DNA"/>
</dbReference>
<dbReference type="EMBL" id="BC103917">
    <property type="protein sequence ID" value="AAI03918.1"/>
    <property type="molecule type" value="mRNA"/>
</dbReference>
<dbReference type="EMBL" id="BC103918">
    <property type="protein sequence ID" value="AAI03919.1"/>
    <property type="molecule type" value="mRNA"/>
</dbReference>
<dbReference type="CCDS" id="CCDS8831.1"/>
<dbReference type="RefSeq" id="NP_258259.1">
    <property type="nucleotide sequence ID" value="NM_033448.3"/>
</dbReference>
<dbReference type="SMR" id="Q3SY84"/>
<dbReference type="BioGRID" id="125205">
    <property type="interactions" value="44"/>
</dbReference>
<dbReference type="ComplexPortal" id="CPX-5665">
    <property type="entry name" value="Keratin-25 - Keratin-71 dimer complex"/>
</dbReference>
<dbReference type="FunCoup" id="Q3SY84">
    <property type="interactions" value="31"/>
</dbReference>
<dbReference type="IntAct" id="Q3SY84">
    <property type="interactions" value="30"/>
</dbReference>
<dbReference type="STRING" id="9606.ENSP00000267119"/>
<dbReference type="GlyGen" id="Q3SY84">
    <property type="glycosylation" value="2 sites, 1 O-linked glycan (1 site)"/>
</dbReference>
<dbReference type="iPTMnet" id="Q3SY84"/>
<dbReference type="PhosphoSitePlus" id="Q3SY84"/>
<dbReference type="SwissPalm" id="Q3SY84"/>
<dbReference type="BioMuta" id="KRT71"/>
<dbReference type="DMDM" id="296439318"/>
<dbReference type="jPOST" id="Q3SY84"/>
<dbReference type="MassIVE" id="Q3SY84"/>
<dbReference type="PaxDb" id="9606-ENSP00000267119"/>
<dbReference type="PeptideAtlas" id="Q3SY84"/>
<dbReference type="PRIDE" id="Q3SY84"/>
<dbReference type="ProteomicsDB" id="61847"/>
<dbReference type="Antibodypedia" id="26633">
    <property type="antibodies" value="92 antibodies from 17 providers"/>
</dbReference>
<dbReference type="DNASU" id="112802"/>
<dbReference type="Ensembl" id="ENST00000267119.6">
    <property type="protein sequence ID" value="ENSP00000267119.5"/>
    <property type="gene ID" value="ENSG00000139648.7"/>
</dbReference>
<dbReference type="GeneID" id="112802"/>
<dbReference type="KEGG" id="hsa:112802"/>
<dbReference type="MANE-Select" id="ENST00000267119.6">
    <property type="protein sequence ID" value="ENSP00000267119.5"/>
    <property type="RefSeq nucleotide sequence ID" value="NM_033448.3"/>
    <property type="RefSeq protein sequence ID" value="NP_258259.1"/>
</dbReference>
<dbReference type="UCSC" id="uc001sao.3">
    <property type="organism name" value="human"/>
</dbReference>
<dbReference type="AGR" id="HGNC:28927"/>
<dbReference type="CTD" id="112802"/>
<dbReference type="DisGeNET" id="112802"/>
<dbReference type="GeneCards" id="KRT71"/>
<dbReference type="HGNC" id="HGNC:28927">
    <property type="gene designation" value="KRT71"/>
</dbReference>
<dbReference type="HPA" id="ENSG00000139648">
    <property type="expression patterns" value="Tissue enriched (skin)"/>
</dbReference>
<dbReference type="MalaCards" id="KRT71"/>
<dbReference type="MIM" id="608245">
    <property type="type" value="gene"/>
</dbReference>
<dbReference type="MIM" id="615896">
    <property type="type" value="phenotype"/>
</dbReference>
<dbReference type="neXtProt" id="NX_Q3SY84"/>
<dbReference type="OpenTargets" id="ENSG00000139648"/>
<dbReference type="Orphanet" id="170">
    <property type="disease" value="Woolly hair"/>
</dbReference>
<dbReference type="PharmGKB" id="PA147357697"/>
<dbReference type="VEuPathDB" id="HostDB:ENSG00000139648"/>
<dbReference type="eggNOG" id="ENOG502SK67">
    <property type="taxonomic scope" value="Eukaryota"/>
</dbReference>
<dbReference type="GeneTree" id="ENSGT00940000162089"/>
<dbReference type="HOGENOM" id="CLU_012560_6_1_1"/>
<dbReference type="InParanoid" id="Q3SY84"/>
<dbReference type="OMA" id="DIKFFRC"/>
<dbReference type="OrthoDB" id="9623624at2759"/>
<dbReference type="PAN-GO" id="Q3SY84">
    <property type="GO annotations" value="4 GO annotations based on evolutionary models"/>
</dbReference>
<dbReference type="PhylomeDB" id="Q3SY84"/>
<dbReference type="TreeFam" id="TF317854"/>
<dbReference type="PathwayCommons" id="Q3SY84"/>
<dbReference type="Reactome" id="R-HSA-6805567">
    <property type="pathway name" value="Keratinization"/>
</dbReference>
<dbReference type="Reactome" id="R-HSA-6809371">
    <property type="pathway name" value="Formation of the cornified envelope"/>
</dbReference>
<dbReference type="SignaLink" id="Q3SY84"/>
<dbReference type="BioGRID-ORCS" id="112802">
    <property type="hits" value="18 hits in 1152 CRISPR screens"/>
</dbReference>
<dbReference type="GenomeRNAi" id="112802"/>
<dbReference type="Pharos" id="Q3SY84">
    <property type="development level" value="Tbio"/>
</dbReference>
<dbReference type="PRO" id="PR:Q3SY84"/>
<dbReference type="Proteomes" id="UP000005640">
    <property type="component" value="Chromosome 12"/>
</dbReference>
<dbReference type="RNAct" id="Q3SY84">
    <property type="molecule type" value="protein"/>
</dbReference>
<dbReference type="Bgee" id="ENSG00000139648">
    <property type="expression patterns" value="Expressed in upper arm skin and 53 other cell types or tissues"/>
</dbReference>
<dbReference type="GO" id="GO:0005829">
    <property type="term" value="C:cytosol"/>
    <property type="evidence" value="ECO:0000304"/>
    <property type="project" value="Reactome"/>
</dbReference>
<dbReference type="GO" id="GO:0070062">
    <property type="term" value="C:extracellular exosome"/>
    <property type="evidence" value="ECO:0007005"/>
    <property type="project" value="UniProtKB"/>
</dbReference>
<dbReference type="GO" id="GO:0045095">
    <property type="term" value="C:keratin filament"/>
    <property type="evidence" value="ECO:0000314"/>
    <property type="project" value="UniProtKB"/>
</dbReference>
<dbReference type="GO" id="GO:0030280">
    <property type="term" value="F:structural constituent of skin epidermis"/>
    <property type="evidence" value="ECO:0000318"/>
    <property type="project" value="GO_Central"/>
</dbReference>
<dbReference type="GO" id="GO:0031069">
    <property type="term" value="P:hair follicle morphogenesis"/>
    <property type="evidence" value="ECO:0000315"/>
    <property type="project" value="UniProtKB"/>
</dbReference>
<dbReference type="GO" id="GO:0045109">
    <property type="term" value="P:intermediate filament organization"/>
    <property type="evidence" value="ECO:0000315"/>
    <property type="project" value="UniProtKB"/>
</dbReference>
<dbReference type="GO" id="GO:0031424">
    <property type="term" value="P:keratinization"/>
    <property type="evidence" value="ECO:0000318"/>
    <property type="project" value="GO_Central"/>
</dbReference>
<dbReference type="FunFam" id="1.20.5.1160:FF:000001">
    <property type="entry name" value="Keratin type II"/>
    <property type="match status" value="1"/>
</dbReference>
<dbReference type="FunFam" id="1.20.5.170:FF:000004">
    <property type="entry name" value="Keratin, type II cytoskeletal 5"/>
    <property type="match status" value="1"/>
</dbReference>
<dbReference type="FunFam" id="1.20.5.500:FF:000001">
    <property type="entry name" value="Type II keratin 23"/>
    <property type="match status" value="1"/>
</dbReference>
<dbReference type="Gene3D" id="1.20.5.170">
    <property type="match status" value="1"/>
</dbReference>
<dbReference type="Gene3D" id="1.20.5.500">
    <property type="entry name" value="Single helix bin"/>
    <property type="match status" value="1"/>
</dbReference>
<dbReference type="Gene3D" id="1.20.5.1160">
    <property type="entry name" value="Vasodilator-stimulated phosphoprotein"/>
    <property type="match status" value="1"/>
</dbReference>
<dbReference type="InterPro" id="IPR018039">
    <property type="entry name" value="IF_conserved"/>
</dbReference>
<dbReference type="InterPro" id="IPR039008">
    <property type="entry name" value="IF_rod_dom"/>
</dbReference>
<dbReference type="InterPro" id="IPR032444">
    <property type="entry name" value="Keratin_2_head"/>
</dbReference>
<dbReference type="InterPro" id="IPR003054">
    <property type="entry name" value="Keratin_II"/>
</dbReference>
<dbReference type="PANTHER" id="PTHR45616">
    <property type="entry name" value="GATA-TYPE DOMAIN-CONTAINING PROTEIN"/>
    <property type="match status" value="1"/>
</dbReference>
<dbReference type="PANTHER" id="PTHR45616:SF16">
    <property type="entry name" value="KERATIN, TYPE II CYTOSKELETAL 71"/>
    <property type="match status" value="1"/>
</dbReference>
<dbReference type="Pfam" id="PF00038">
    <property type="entry name" value="Filament"/>
    <property type="match status" value="1"/>
</dbReference>
<dbReference type="Pfam" id="PF16208">
    <property type="entry name" value="Keratin_2_head"/>
    <property type="match status" value="1"/>
</dbReference>
<dbReference type="PRINTS" id="PR01276">
    <property type="entry name" value="TYPE2KERATIN"/>
</dbReference>
<dbReference type="SMART" id="SM01391">
    <property type="entry name" value="Filament"/>
    <property type="match status" value="1"/>
</dbReference>
<dbReference type="SUPFAM" id="SSF64593">
    <property type="entry name" value="Intermediate filament protein, coiled coil region"/>
    <property type="match status" value="3"/>
</dbReference>
<dbReference type="PROSITE" id="PS00226">
    <property type="entry name" value="IF_ROD_1"/>
    <property type="match status" value="1"/>
</dbReference>
<dbReference type="PROSITE" id="PS51842">
    <property type="entry name" value="IF_ROD_2"/>
    <property type="match status" value="1"/>
</dbReference>
<protein>
    <recommendedName>
        <fullName>Keratin, type II cytoskeletal 71</fullName>
    </recommendedName>
    <alternativeName>
        <fullName>Cytokeratin-71</fullName>
        <shortName>CK-71</shortName>
    </alternativeName>
    <alternativeName>
        <fullName>Keratin-71</fullName>
        <shortName>K71</shortName>
    </alternativeName>
    <alternativeName>
        <fullName>Type II inner root sheath-specific keratin-K6irs1</fullName>
        <shortName>Keratin 6 irs</shortName>
        <shortName>hK6irs</shortName>
        <shortName>hK6irs1</shortName>
    </alternativeName>
    <alternativeName>
        <fullName>Type-II keratin Kb34</fullName>
    </alternativeName>
</protein>
<keyword id="KW-0175">Coiled coil</keyword>
<keyword id="KW-0963">Cytoplasm</keyword>
<keyword id="KW-0206">Cytoskeleton</keyword>
<keyword id="KW-0225">Disease variant</keyword>
<keyword id="KW-1063">Hypotrichosis</keyword>
<keyword id="KW-0403">Intermediate filament</keyword>
<keyword id="KW-0416">Keratin</keyword>
<keyword id="KW-1267">Proteomics identification</keyword>
<keyword id="KW-1185">Reference proteome</keyword>
<evidence type="ECO:0000250" key="1"/>
<evidence type="ECO:0000255" key="2">
    <source>
        <dbReference type="PROSITE-ProRule" id="PRU01188"/>
    </source>
</evidence>
<evidence type="ECO:0000256" key="3">
    <source>
        <dbReference type="SAM" id="MobiDB-lite"/>
    </source>
</evidence>
<evidence type="ECO:0000269" key="4">
    <source>
    </source>
</evidence>
<evidence type="ECO:0000269" key="5">
    <source>
    </source>
</evidence>
<evidence type="ECO:0000269" key="6">
    <source>
    </source>
</evidence>
<evidence type="ECO:0000269" key="7">
    <source>
    </source>
</evidence>
<evidence type="ECO:0000269" key="8">
    <source>
    </source>
</evidence>
<evidence type="ECO:0000269" key="9">
    <source ref="4"/>
</evidence>
<evidence type="ECO:0000305" key="10"/>
<proteinExistence type="evidence at protein level"/>
<reference key="1">
    <citation type="journal article" date="2002" name="J. Invest. Dermatol.">
        <title>A novel epithelial keratin, hK6irs1, is expressed differentially in all layers of the inner root sheath, including specialized huxley cells (Flugelzellen) of the human hair follicle.</title>
        <authorList>
            <person name="Langbein L."/>
            <person name="Rogers M.A."/>
            <person name="Praetzel S."/>
            <person name="Aoki N."/>
            <person name="Winter H."/>
            <person name="Schweizer J."/>
        </authorList>
    </citation>
    <scope>NUCLEOTIDE SEQUENCE [MRNA]</scope>
    <scope>TISSUE SPECIFICITY</scope>
    <source>
        <tissue>Scalp</tissue>
    </source>
</reference>
<reference key="2">
    <citation type="journal article" date="2004" name="Nat. Genet.">
        <title>Complete sequencing and characterization of 21,243 full-length human cDNAs.</title>
        <authorList>
            <person name="Ota T."/>
            <person name="Suzuki Y."/>
            <person name="Nishikawa T."/>
            <person name="Otsuki T."/>
            <person name="Sugiyama T."/>
            <person name="Irie R."/>
            <person name="Wakamatsu A."/>
            <person name="Hayashi K."/>
            <person name="Sato H."/>
            <person name="Nagai K."/>
            <person name="Kimura K."/>
            <person name="Makita H."/>
            <person name="Sekine M."/>
            <person name="Obayashi M."/>
            <person name="Nishi T."/>
            <person name="Shibahara T."/>
            <person name="Tanaka T."/>
            <person name="Ishii S."/>
            <person name="Yamamoto J."/>
            <person name="Saito K."/>
            <person name="Kawai Y."/>
            <person name="Isono Y."/>
            <person name="Nakamura Y."/>
            <person name="Nagahari K."/>
            <person name="Murakami K."/>
            <person name="Yasuda T."/>
            <person name="Iwayanagi T."/>
            <person name="Wagatsuma M."/>
            <person name="Shiratori A."/>
            <person name="Sudo H."/>
            <person name="Hosoiri T."/>
            <person name="Kaku Y."/>
            <person name="Kodaira H."/>
            <person name="Kondo H."/>
            <person name="Sugawara M."/>
            <person name="Takahashi M."/>
            <person name="Kanda K."/>
            <person name="Yokoi T."/>
            <person name="Furuya T."/>
            <person name="Kikkawa E."/>
            <person name="Omura Y."/>
            <person name="Abe K."/>
            <person name="Kamihara K."/>
            <person name="Katsuta N."/>
            <person name="Sato K."/>
            <person name="Tanikawa M."/>
            <person name="Yamazaki M."/>
            <person name="Ninomiya K."/>
            <person name="Ishibashi T."/>
            <person name="Yamashita H."/>
            <person name="Murakawa K."/>
            <person name="Fujimori K."/>
            <person name="Tanai H."/>
            <person name="Kimata M."/>
            <person name="Watanabe M."/>
            <person name="Hiraoka S."/>
            <person name="Chiba Y."/>
            <person name="Ishida S."/>
            <person name="Ono Y."/>
            <person name="Takiguchi S."/>
            <person name="Watanabe S."/>
            <person name="Yosida M."/>
            <person name="Hotuta T."/>
            <person name="Kusano J."/>
            <person name="Kanehori K."/>
            <person name="Takahashi-Fujii A."/>
            <person name="Hara H."/>
            <person name="Tanase T.-O."/>
            <person name="Nomura Y."/>
            <person name="Togiya S."/>
            <person name="Komai F."/>
            <person name="Hara R."/>
            <person name="Takeuchi K."/>
            <person name="Arita M."/>
            <person name="Imose N."/>
            <person name="Musashino K."/>
            <person name="Yuuki H."/>
            <person name="Oshima A."/>
            <person name="Sasaki N."/>
            <person name="Aotsuka S."/>
            <person name="Yoshikawa Y."/>
            <person name="Matsunawa H."/>
            <person name="Ichihara T."/>
            <person name="Shiohata N."/>
            <person name="Sano S."/>
            <person name="Moriya S."/>
            <person name="Momiyama H."/>
            <person name="Satoh N."/>
            <person name="Takami S."/>
            <person name="Terashima Y."/>
            <person name="Suzuki O."/>
            <person name="Nakagawa S."/>
            <person name="Senoh A."/>
            <person name="Mizoguchi H."/>
            <person name="Goto Y."/>
            <person name="Shimizu F."/>
            <person name="Wakebe H."/>
            <person name="Hishigaki H."/>
            <person name="Watanabe T."/>
            <person name="Sugiyama A."/>
            <person name="Takemoto M."/>
            <person name="Kawakami B."/>
            <person name="Yamazaki M."/>
            <person name="Watanabe K."/>
            <person name="Kumagai A."/>
            <person name="Itakura S."/>
            <person name="Fukuzumi Y."/>
            <person name="Fujimori Y."/>
            <person name="Komiyama M."/>
            <person name="Tashiro H."/>
            <person name="Tanigami A."/>
            <person name="Fujiwara T."/>
            <person name="Ono T."/>
            <person name="Yamada K."/>
            <person name="Fujii Y."/>
            <person name="Ozaki K."/>
            <person name="Hirao M."/>
            <person name="Ohmori Y."/>
            <person name="Kawabata A."/>
            <person name="Hikiji T."/>
            <person name="Kobatake N."/>
            <person name="Inagaki H."/>
            <person name="Ikema Y."/>
            <person name="Okamoto S."/>
            <person name="Okitani R."/>
            <person name="Kawakami T."/>
            <person name="Noguchi S."/>
            <person name="Itoh T."/>
            <person name="Shigeta K."/>
            <person name="Senba T."/>
            <person name="Matsumura K."/>
            <person name="Nakajima Y."/>
            <person name="Mizuno T."/>
            <person name="Morinaga M."/>
            <person name="Sasaki M."/>
            <person name="Togashi T."/>
            <person name="Oyama M."/>
            <person name="Hata H."/>
            <person name="Watanabe M."/>
            <person name="Komatsu T."/>
            <person name="Mizushima-Sugano J."/>
            <person name="Satoh T."/>
            <person name="Shirai Y."/>
            <person name="Takahashi Y."/>
            <person name="Nakagawa K."/>
            <person name="Okumura K."/>
            <person name="Nagase T."/>
            <person name="Nomura N."/>
            <person name="Kikuchi H."/>
            <person name="Masuho Y."/>
            <person name="Yamashita R."/>
            <person name="Nakai K."/>
            <person name="Yada T."/>
            <person name="Nakamura Y."/>
            <person name="Ohara O."/>
            <person name="Isogai T."/>
            <person name="Sugano S."/>
        </authorList>
    </citation>
    <scope>NUCLEOTIDE SEQUENCE [LARGE SCALE MRNA]</scope>
    <source>
        <tissue>Thymus</tissue>
    </source>
</reference>
<reference key="3">
    <citation type="journal article" date="2006" name="Nature">
        <title>The finished DNA sequence of human chromosome 12.</title>
        <authorList>
            <person name="Scherer S.E."/>
            <person name="Muzny D.M."/>
            <person name="Buhay C.J."/>
            <person name="Chen R."/>
            <person name="Cree A."/>
            <person name="Ding Y."/>
            <person name="Dugan-Rocha S."/>
            <person name="Gill R."/>
            <person name="Gunaratne P."/>
            <person name="Harris R.A."/>
            <person name="Hawes A.C."/>
            <person name="Hernandez J."/>
            <person name="Hodgson A.V."/>
            <person name="Hume J."/>
            <person name="Jackson A."/>
            <person name="Khan Z.M."/>
            <person name="Kovar-Smith C."/>
            <person name="Lewis L.R."/>
            <person name="Lozado R.J."/>
            <person name="Metzker M.L."/>
            <person name="Milosavljevic A."/>
            <person name="Miner G.R."/>
            <person name="Montgomery K.T."/>
            <person name="Morgan M.B."/>
            <person name="Nazareth L.V."/>
            <person name="Scott G."/>
            <person name="Sodergren E."/>
            <person name="Song X.-Z."/>
            <person name="Steffen D."/>
            <person name="Lovering R.C."/>
            <person name="Wheeler D.A."/>
            <person name="Worley K.C."/>
            <person name="Yuan Y."/>
            <person name="Zhang Z."/>
            <person name="Adams C.Q."/>
            <person name="Ansari-Lari M.A."/>
            <person name="Ayele M."/>
            <person name="Brown M.J."/>
            <person name="Chen G."/>
            <person name="Chen Z."/>
            <person name="Clerc-Blankenburg K.P."/>
            <person name="Davis C."/>
            <person name="Delgado O."/>
            <person name="Dinh H.H."/>
            <person name="Draper H."/>
            <person name="Gonzalez-Garay M.L."/>
            <person name="Havlak P."/>
            <person name="Jackson L.R."/>
            <person name="Jacob L.S."/>
            <person name="Kelly S.H."/>
            <person name="Li L."/>
            <person name="Li Z."/>
            <person name="Liu J."/>
            <person name="Liu W."/>
            <person name="Lu J."/>
            <person name="Maheshwari M."/>
            <person name="Nguyen B.-V."/>
            <person name="Okwuonu G.O."/>
            <person name="Pasternak S."/>
            <person name="Perez L.M."/>
            <person name="Plopper F.J.H."/>
            <person name="Santibanez J."/>
            <person name="Shen H."/>
            <person name="Tabor P.E."/>
            <person name="Verduzco D."/>
            <person name="Waldron L."/>
            <person name="Wang Q."/>
            <person name="Williams G.A."/>
            <person name="Zhang J."/>
            <person name="Zhou J."/>
            <person name="Allen C.C."/>
            <person name="Amin A.G."/>
            <person name="Anyalebechi V."/>
            <person name="Bailey M."/>
            <person name="Barbaria J.A."/>
            <person name="Bimage K.E."/>
            <person name="Bryant N.P."/>
            <person name="Burch P.E."/>
            <person name="Burkett C.E."/>
            <person name="Burrell K.L."/>
            <person name="Calderon E."/>
            <person name="Cardenas V."/>
            <person name="Carter K."/>
            <person name="Casias K."/>
            <person name="Cavazos I."/>
            <person name="Cavazos S.R."/>
            <person name="Ceasar H."/>
            <person name="Chacko J."/>
            <person name="Chan S.N."/>
            <person name="Chavez D."/>
            <person name="Christopoulos C."/>
            <person name="Chu J."/>
            <person name="Cockrell R."/>
            <person name="Cox C.D."/>
            <person name="Dang M."/>
            <person name="Dathorne S.R."/>
            <person name="David R."/>
            <person name="Davis C.M."/>
            <person name="Davy-Carroll L."/>
            <person name="Deshazo D.R."/>
            <person name="Donlin J.E."/>
            <person name="D'Souza L."/>
            <person name="Eaves K.A."/>
            <person name="Egan A."/>
            <person name="Emery-Cohen A.J."/>
            <person name="Escotto M."/>
            <person name="Flagg N."/>
            <person name="Forbes L.D."/>
            <person name="Gabisi A.M."/>
            <person name="Garza M."/>
            <person name="Hamilton C."/>
            <person name="Henderson N."/>
            <person name="Hernandez O."/>
            <person name="Hines S."/>
            <person name="Hogues M.E."/>
            <person name="Huang M."/>
            <person name="Idlebird D.G."/>
            <person name="Johnson R."/>
            <person name="Jolivet A."/>
            <person name="Jones S."/>
            <person name="Kagan R."/>
            <person name="King L.M."/>
            <person name="Leal B."/>
            <person name="Lebow H."/>
            <person name="Lee S."/>
            <person name="LeVan J.M."/>
            <person name="Lewis L.C."/>
            <person name="London P."/>
            <person name="Lorensuhewa L.M."/>
            <person name="Loulseged H."/>
            <person name="Lovett D.A."/>
            <person name="Lucier A."/>
            <person name="Lucier R.L."/>
            <person name="Ma J."/>
            <person name="Madu R.C."/>
            <person name="Mapua P."/>
            <person name="Martindale A.D."/>
            <person name="Martinez E."/>
            <person name="Massey E."/>
            <person name="Mawhiney S."/>
            <person name="Meador M.G."/>
            <person name="Mendez S."/>
            <person name="Mercado C."/>
            <person name="Mercado I.C."/>
            <person name="Merritt C.E."/>
            <person name="Miner Z.L."/>
            <person name="Minja E."/>
            <person name="Mitchell T."/>
            <person name="Mohabbat F."/>
            <person name="Mohabbat K."/>
            <person name="Montgomery B."/>
            <person name="Moore N."/>
            <person name="Morris S."/>
            <person name="Munidasa M."/>
            <person name="Ngo R.N."/>
            <person name="Nguyen N.B."/>
            <person name="Nickerson E."/>
            <person name="Nwaokelemeh O.O."/>
            <person name="Nwokenkwo S."/>
            <person name="Obregon M."/>
            <person name="Oguh M."/>
            <person name="Oragunye N."/>
            <person name="Oviedo R.J."/>
            <person name="Parish B.J."/>
            <person name="Parker D.N."/>
            <person name="Parrish J."/>
            <person name="Parks K.L."/>
            <person name="Paul H.A."/>
            <person name="Payton B.A."/>
            <person name="Perez A."/>
            <person name="Perrin W."/>
            <person name="Pickens A."/>
            <person name="Primus E.L."/>
            <person name="Pu L.-L."/>
            <person name="Puazo M."/>
            <person name="Quiles M.M."/>
            <person name="Quiroz J.B."/>
            <person name="Rabata D."/>
            <person name="Reeves K."/>
            <person name="Ruiz S.J."/>
            <person name="Shao H."/>
            <person name="Sisson I."/>
            <person name="Sonaike T."/>
            <person name="Sorelle R.P."/>
            <person name="Sutton A.E."/>
            <person name="Svatek A.F."/>
            <person name="Svetz L.A."/>
            <person name="Tamerisa K.S."/>
            <person name="Taylor T.R."/>
            <person name="Teague B."/>
            <person name="Thomas N."/>
            <person name="Thorn R.D."/>
            <person name="Trejos Z.Y."/>
            <person name="Trevino B.K."/>
            <person name="Ukegbu O.N."/>
            <person name="Urban J.B."/>
            <person name="Vasquez L.I."/>
            <person name="Vera V.A."/>
            <person name="Villasana D.M."/>
            <person name="Wang L."/>
            <person name="Ward-Moore S."/>
            <person name="Warren J.T."/>
            <person name="Wei X."/>
            <person name="White F."/>
            <person name="Williamson A.L."/>
            <person name="Wleczyk R."/>
            <person name="Wooden H.S."/>
            <person name="Wooden S.H."/>
            <person name="Yen J."/>
            <person name="Yoon L."/>
            <person name="Yoon V."/>
            <person name="Zorrilla S.E."/>
            <person name="Nelson D."/>
            <person name="Kucherlapati R."/>
            <person name="Weinstock G."/>
            <person name="Gibbs R.A."/>
        </authorList>
    </citation>
    <scope>NUCLEOTIDE SEQUENCE [LARGE SCALE GENOMIC DNA]</scope>
</reference>
<reference key="4">
    <citation type="submission" date="2005-07" db="EMBL/GenBank/DDBJ databases">
        <authorList>
            <person name="Mural R.J."/>
            <person name="Istrail S."/>
            <person name="Sutton G.G."/>
            <person name="Florea L."/>
            <person name="Halpern A.L."/>
            <person name="Mobarry C.M."/>
            <person name="Lippert R."/>
            <person name="Walenz B."/>
            <person name="Shatkay H."/>
            <person name="Dew I."/>
            <person name="Miller J.R."/>
            <person name="Flanigan M.J."/>
            <person name="Edwards N.J."/>
            <person name="Bolanos R."/>
            <person name="Fasulo D."/>
            <person name="Halldorsson B.V."/>
            <person name="Hannenhalli S."/>
            <person name="Turner R."/>
            <person name="Yooseph S."/>
            <person name="Lu F."/>
            <person name="Nusskern D.R."/>
            <person name="Shue B.C."/>
            <person name="Zheng X.H."/>
            <person name="Zhong F."/>
            <person name="Delcher A.L."/>
            <person name="Huson D.H."/>
            <person name="Kravitz S.A."/>
            <person name="Mouchard L."/>
            <person name="Reinert K."/>
            <person name="Remington K.A."/>
            <person name="Clark A.G."/>
            <person name="Waterman M.S."/>
            <person name="Eichler E.E."/>
            <person name="Adams M.D."/>
            <person name="Hunkapiller M.W."/>
            <person name="Myers E.W."/>
            <person name="Venter J.C."/>
        </authorList>
    </citation>
    <scope>NUCLEOTIDE SEQUENCE [LARGE SCALE GENOMIC DNA]</scope>
    <scope>VARIANT GLY-464</scope>
</reference>
<reference key="5">
    <citation type="journal article" date="2004" name="Genome Res.">
        <title>The status, quality, and expansion of the NIH full-length cDNA project: the Mammalian Gene Collection (MGC).</title>
        <authorList>
            <consortium name="The MGC Project Team"/>
        </authorList>
    </citation>
    <scope>NUCLEOTIDE SEQUENCE [LARGE SCALE MRNA]</scope>
    <scope>VARIANT GLY-464</scope>
</reference>
<reference key="6">
    <citation type="journal article" date="2003" name="J. Invest. Dermatol.">
        <title>K6irs1, K6irs2, K6irs3, and K6irs4 represent the inner-root-sheath-specific type II epithelial keratins of the human hair follicle.</title>
        <authorList>
            <person name="Langbein L."/>
            <person name="Rogers M.A."/>
            <person name="Praetzel S."/>
            <person name="Winter H."/>
            <person name="Schweizer J."/>
        </authorList>
    </citation>
    <scope>TISSUE SPECIFICITY</scope>
</reference>
<reference key="7">
    <citation type="journal article" date="2006" name="J. Invest. Dermatol.">
        <title>K25 (K25irs1), K26 (K25irs2), K27 (K25irs3), and K28 (K25irs4) represent the type I inner root sheath keratins of the human hair follicle.</title>
        <authorList>
            <person name="Langbein L."/>
            <person name="Rogers M.A."/>
            <person name="Praetzel-Wunder S."/>
            <person name="Helmke B."/>
            <person name="Schirmacher P."/>
            <person name="Schweizer J."/>
        </authorList>
    </citation>
    <scope>TISSUE SPECIFICITY</scope>
</reference>
<reference key="8">
    <citation type="journal article" date="2011" name="BMC Syst. Biol.">
        <title>Initial characterization of the human central proteome.</title>
        <authorList>
            <person name="Burkard T.R."/>
            <person name="Planyavsky M."/>
            <person name="Kaupe I."/>
            <person name="Breitwieser F.P."/>
            <person name="Buerckstuemmer T."/>
            <person name="Bennett K.L."/>
            <person name="Superti-Furga G."/>
            <person name="Colinge J."/>
        </authorList>
    </citation>
    <scope>IDENTIFICATION BY MASS SPECTROMETRY [LARGE SCALE ANALYSIS]</scope>
</reference>
<reference key="9">
    <citation type="journal article" date="2012" name="J. Invest. Dermatol.">
        <title>A missense mutation within the helix initiation motif of the keratin K71 gene underlies autosomal dominant woolly hair/hypotrichosis.</title>
        <authorList>
            <person name="Fujimoto A."/>
            <person name="Farooq M."/>
            <person name="Fujikawa H."/>
            <person name="Inoue A."/>
            <person name="Ohyama M."/>
            <person name="Ehama R."/>
            <person name="Nakanishi J."/>
            <person name="Hagihara M."/>
            <person name="Iwabuchi T."/>
            <person name="Aoki J."/>
            <person name="Ito M."/>
            <person name="Shimomura Y."/>
        </authorList>
    </citation>
    <scope>FUNCTION</scope>
    <scope>INVOLVEMENT IN HYPT13</scope>
    <scope>VARIANT HYPT13 CYS-141</scope>
    <scope>CHARACTERIZATION OF VARIANT HYPT13 CYS-141</scope>
    <scope>TISSUE SPECIFICITY</scope>
    <scope>SUBCELLULAR LOCATION</scope>
</reference>
<feature type="chain" id="PRO_0000314874" description="Keratin, type II cytoskeletal 71">
    <location>
        <begin position="1"/>
        <end position="523"/>
    </location>
</feature>
<feature type="domain" description="IF rod" evidence="2">
    <location>
        <begin position="130"/>
        <end position="443"/>
    </location>
</feature>
<feature type="region of interest" description="Head">
    <location>
        <begin position="1"/>
        <end position="129"/>
    </location>
</feature>
<feature type="region of interest" description="Coil 1A">
    <location>
        <begin position="130"/>
        <end position="165"/>
    </location>
</feature>
<feature type="region of interest" description="Linker 1">
    <location>
        <begin position="166"/>
        <end position="184"/>
    </location>
</feature>
<feature type="region of interest" description="Coil 1B">
    <location>
        <begin position="185"/>
        <end position="276"/>
    </location>
</feature>
<feature type="region of interest" description="Linker 12">
    <location>
        <begin position="277"/>
        <end position="300"/>
    </location>
</feature>
<feature type="region of interest" description="Coil 2">
    <location>
        <begin position="301"/>
        <end position="439"/>
    </location>
</feature>
<feature type="region of interest" description="Tail">
    <location>
        <begin position="440"/>
        <end position="523"/>
    </location>
</feature>
<feature type="region of interest" description="Disordered" evidence="3">
    <location>
        <begin position="492"/>
        <end position="523"/>
    </location>
</feature>
<feature type="compositionally biased region" description="Basic and acidic residues" evidence="3">
    <location>
        <begin position="493"/>
        <end position="508"/>
    </location>
</feature>
<feature type="compositionally biased region" description="Polar residues" evidence="3">
    <location>
        <begin position="510"/>
        <end position="523"/>
    </location>
</feature>
<feature type="site" description="Stutter">
    <location>
        <position position="381"/>
    </location>
</feature>
<feature type="sequence variant" id="VAR_038082" description="In dbSNP:rs665522.">
    <original>V</original>
    <variation>I</variation>
    <location>
        <position position="107"/>
    </location>
</feature>
<feature type="sequence variant" id="VAR_038083" description="In dbSNP:rs665470.">
    <original>E</original>
    <variation>K</variation>
    <location>
        <position position="122"/>
    </location>
</feature>
<feature type="sequence variant" id="VAR_071406" description="In HYPT13; dominant negative; decreased keratin intermediate filament formation; dbSNP:rs587777545." evidence="8">
    <original>F</original>
    <variation>C</variation>
    <location>
        <position position="141"/>
    </location>
</feature>
<feature type="sequence variant" id="VAR_038084" description="In dbSNP:rs35988863.">
    <original>I</original>
    <variation>F</variation>
    <location>
        <position position="355"/>
    </location>
</feature>
<feature type="sequence variant" id="VAR_038085" description="In dbSNP:rs10783518." evidence="6 9">
    <original>V</original>
    <variation>G</variation>
    <location>
        <position position="464"/>
    </location>
</feature>
<feature type="sequence variant" id="VAR_038086" description="In dbSNP:rs2292506.">
    <original>R</original>
    <variation>Q</variation>
    <location>
        <position position="523"/>
    </location>
</feature>
<feature type="sequence conflict" description="In Ref. 5; AAI03919." evidence="10" ref="5">
    <original>R</original>
    <variation>Q</variation>
    <location>
        <position position="210"/>
    </location>
</feature>
<comment type="function">
    <text evidence="8">Plays a central role in hair formation. Essential component of keratin intermediate filaments in the inner root sheath (IRS) of the hair follicle.</text>
</comment>
<comment type="subunit">
    <text evidence="1">Heterodimer of a type I and a type II keratin. Associates with KRT16 and/or KRT17 (By similarity).</text>
</comment>
<comment type="interaction">
    <interactant intactId="EBI-2952676">
        <id>Q3SY84</id>
    </interactant>
    <interactant intactId="EBI-10171552">
        <id>A1A4E9</id>
        <label>KRT13</label>
    </interactant>
    <organismsDiffer>false</organismsDiffer>
    <experiments>3</experiments>
</comment>
<comment type="interaction">
    <interactant intactId="EBI-2952676">
        <id>Q3SY84</id>
    </interactant>
    <interactant intactId="EBI-739566">
        <id>P19012</id>
        <label>KRT15</label>
    </interactant>
    <organismsDiffer>false</organismsDiffer>
    <experiments>6</experiments>
</comment>
<comment type="interaction">
    <interactant intactId="EBI-2952676">
        <id>Q3SY84</id>
    </interactant>
    <interactant intactId="EBI-356410">
        <id>P08779</id>
        <label>KRT16</label>
    </interactant>
    <organismsDiffer>false</organismsDiffer>
    <experiments>3</experiments>
</comment>
<comment type="interaction">
    <interactant intactId="EBI-2952676">
        <id>Q3SY84</id>
    </interactant>
    <interactant intactId="EBI-297888">
        <id>P05783</id>
        <label>KRT18</label>
    </interactant>
    <organismsDiffer>false</organismsDiffer>
    <experiments>3</experiments>
</comment>
<comment type="interaction">
    <interactant intactId="EBI-2952676">
        <id>Q3SY84</id>
    </interactant>
    <interactant intactId="EBI-742756">
        <id>P08727</id>
        <label>KRT19</label>
    </interactant>
    <organismsDiffer>false</organismsDiffer>
    <experiments>3</experiments>
</comment>
<comment type="interaction">
    <interactant intactId="EBI-2952676">
        <id>Q3SY84</id>
    </interactant>
    <interactant intactId="EBI-2952736">
        <id>Q2M2I5</id>
        <label>KRT24</label>
    </interactant>
    <organismsDiffer>false</organismsDiffer>
    <experiments>5</experiments>
</comment>
<comment type="interaction">
    <interactant intactId="EBI-2952676">
        <id>Q3SY84</id>
    </interactant>
    <interactant intactId="EBI-11980019">
        <id>Q7Z3Z0</id>
        <label>KRT25</label>
    </interactant>
    <organismsDiffer>false</organismsDiffer>
    <experiments>5</experiments>
</comment>
<comment type="interaction">
    <interactant intactId="EBI-2952676">
        <id>Q3SY84</id>
    </interactant>
    <interactant intactId="EBI-12084444">
        <id>Q7Z3Y9</id>
        <label>KRT26</label>
    </interactant>
    <organismsDiffer>false</organismsDiffer>
    <experiments>3</experiments>
</comment>
<comment type="interaction">
    <interactant intactId="EBI-2952676">
        <id>Q3SY84</id>
    </interactant>
    <interactant intactId="EBI-3044087">
        <id>Q7Z3Y8</id>
        <label>KRT27</label>
    </interactant>
    <organismsDiffer>false</organismsDiffer>
    <experiments>3</experiments>
</comment>
<comment type="interaction">
    <interactant intactId="EBI-2952676">
        <id>Q3SY84</id>
    </interactant>
    <interactant intactId="EBI-11980489">
        <id>Q7Z3Y7</id>
        <label>KRT28</label>
    </interactant>
    <organismsDiffer>false</organismsDiffer>
    <experiments>5</experiments>
</comment>
<comment type="interaction">
    <interactant intactId="EBI-2952676">
        <id>Q3SY84</id>
    </interactant>
    <interactant intactId="EBI-948001">
        <id>Q15323</id>
        <label>KRT31</label>
    </interactant>
    <organismsDiffer>false</organismsDiffer>
    <experiments>6</experiments>
</comment>
<comment type="interaction">
    <interactant intactId="EBI-2952676">
        <id>Q3SY84</id>
    </interactant>
    <interactant intactId="EBI-1049638">
        <id>Q14525</id>
        <label>KRT33B</label>
    </interactant>
    <organismsDiffer>false</organismsDiffer>
    <experiments>3</experiments>
</comment>
<comment type="interaction">
    <interactant intactId="EBI-2952676">
        <id>Q3SY84</id>
    </interactant>
    <interactant intactId="EBI-1047093">
        <id>O76011</id>
        <label>KRT34</label>
    </interactant>
    <organismsDiffer>false</organismsDiffer>
    <experiments>3</experiments>
</comment>
<comment type="interaction">
    <interactant intactId="EBI-2952676">
        <id>Q3SY84</id>
    </interactant>
    <interactant intactId="EBI-1058674">
        <id>Q92764</id>
        <label>KRT35</label>
    </interactant>
    <organismsDiffer>false</organismsDiffer>
    <experiments>3</experiments>
</comment>
<comment type="interaction">
    <interactant intactId="EBI-2952676">
        <id>Q3SY84</id>
    </interactant>
    <interactant intactId="EBI-1045716">
        <id>O76014</id>
        <label>KRT37</label>
    </interactant>
    <organismsDiffer>false</organismsDiffer>
    <experiments>3</experiments>
</comment>
<comment type="interaction">
    <interactant intactId="EBI-2952676">
        <id>Q3SY84</id>
    </interactant>
    <interactant intactId="EBI-1047263">
        <id>O76015</id>
        <label>KRT38</label>
    </interactant>
    <organismsDiffer>false</organismsDiffer>
    <experiments>6</experiments>
</comment>
<comment type="interaction">
    <interactant intactId="EBI-2952676">
        <id>Q3SY84</id>
    </interactant>
    <interactant intactId="EBI-10171697">
        <id>Q6A162</id>
        <label>KRT40</label>
    </interactant>
    <organismsDiffer>false</organismsDiffer>
    <experiments>6</experiments>
</comment>
<comment type="interaction">
    <interactant intactId="EBI-2952676">
        <id>Q3SY84</id>
    </interactant>
    <interactant intactId="EBI-739895">
        <id>Q8N6Y0</id>
        <label>USHBP1</label>
    </interactant>
    <organismsDiffer>false</organismsDiffer>
    <experiments>3</experiments>
</comment>
<comment type="interaction">
    <interactant intactId="EBI-2952676">
        <id>Q3SY84</id>
    </interactant>
    <interactant intactId="EBI-712969">
        <id>Q9Y3C0</id>
        <label>WASHC3</label>
    </interactant>
    <organismsDiffer>false</organismsDiffer>
    <experiments>3</experiments>
</comment>
<comment type="subcellular location">
    <subcellularLocation>
        <location evidence="8">Cytoplasm</location>
        <location evidence="8">Cytoskeleton</location>
    </subcellularLocation>
</comment>
<comment type="tissue specificity">
    <text evidence="4 5 7 8">Highly expressed in hair follicles from scalp. Specifically expressed in the inner root sheath (IRS) of the hair follicle. Present in the all 3 IRS layers: the cuticle, the Henle and the Huxley layers. Also detected in the pseudopods of specialized Huxley cells, termed Fluegelzellen, along the area of differentiated Henle cells (at protein level).</text>
</comment>
<comment type="developmental stage">
    <text>In all 3 IRS layers, expression begins simultaneously in adjacent cells of the lowermost bulb above the germinative cell pool and terminated higher up in the follicle with the asynchronous terminal differentiation of each cell layer (at protein level).</text>
</comment>
<comment type="disease" evidence="8">
    <disease id="DI-04158">
        <name>Hypotrichosis 13</name>
        <acronym>HYPT13</acronym>
        <description>A form of hypotrichosis, a condition characterized by the presence of less than the normal amount of hair and abnormal hair follicles and shafts, which are thin and atrophic. The extent of scalp and body hair involvement can be very variable, within as well as between families. HYPT13 is an autosomal dominant form characterized by sparse woolly hair.</description>
        <dbReference type="MIM" id="615896"/>
    </disease>
    <text>The disease is caused by variants affecting the gene represented in this entry.</text>
</comment>
<comment type="miscellaneous">
    <text>There are two types of cytoskeletal and microfibrillar keratin, I (acidic) and II (neutral to basic) (40-55 and 56-70 kDa, respectively).</text>
</comment>
<comment type="similarity">
    <text evidence="2">Belongs to the intermediate filament family.</text>
</comment>
<accession>Q3SY84</accession>
<accession>B3KVC1</accession>
<accession>Q3SY85</accession>
<accession>Q96DU2</accession>